<reference key="1">
    <citation type="journal article" date="2002" name="Proc. Natl. Acad. Sci. U.S.A.">
        <title>Extensive mosaic structure revealed by the complete genome sequence of uropathogenic Escherichia coli.</title>
        <authorList>
            <person name="Welch R.A."/>
            <person name="Burland V."/>
            <person name="Plunkett G. III"/>
            <person name="Redford P."/>
            <person name="Roesch P."/>
            <person name="Rasko D."/>
            <person name="Buckles E.L."/>
            <person name="Liou S.-R."/>
            <person name="Boutin A."/>
            <person name="Hackett J."/>
            <person name="Stroud D."/>
            <person name="Mayhew G.F."/>
            <person name="Rose D.J."/>
            <person name="Zhou S."/>
            <person name="Schwartz D.C."/>
            <person name="Perna N.T."/>
            <person name="Mobley H.L.T."/>
            <person name="Donnenberg M.S."/>
            <person name="Blattner F.R."/>
        </authorList>
    </citation>
    <scope>NUCLEOTIDE SEQUENCE [LARGE SCALE GENOMIC DNA]</scope>
    <source>
        <strain>CFT073 / ATCC 700928 / UPEC</strain>
    </source>
</reference>
<reference key="2">
    <citation type="journal article" date="2016" name="Proc. Natl. Acad. Sci. U.S.A.">
        <title>Assignment of function to a domain of unknown function: DUF1537 is a new kinase family in catabolic pathways for acid sugars.</title>
        <authorList>
            <person name="Zhang X."/>
            <person name="Carter M.S."/>
            <person name="Vetting M.W."/>
            <person name="San Francisco B."/>
            <person name="Zhao S."/>
            <person name="Al-Obaidi N.F."/>
            <person name="Solbiati J.O."/>
            <person name="Thiaville J.J."/>
            <person name="de Crecy-Lagard V."/>
            <person name="Jacobson M.P."/>
            <person name="Almo S.C."/>
            <person name="Gerlt J.A."/>
        </authorList>
    </citation>
    <scope>FUNCTION</scope>
    <scope>CATALYTIC ACTIVITY</scope>
    <source>
        <strain>CFT073 / ATCC 700928 / UPEC</strain>
    </source>
</reference>
<organism>
    <name type="scientific">Escherichia coli O6:H1 (strain CFT073 / ATCC 700928 / UPEC)</name>
    <dbReference type="NCBI Taxonomy" id="199310"/>
    <lineage>
        <taxon>Bacteria</taxon>
        <taxon>Pseudomonadati</taxon>
        <taxon>Pseudomonadota</taxon>
        <taxon>Gammaproteobacteria</taxon>
        <taxon>Enterobacterales</taxon>
        <taxon>Enterobacteriaceae</taxon>
        <taxon>Escherichia</taxon>
    </lineage>
</organism>
<gene>
    <name evidence="3" type="primary">otnC</name>
    <name evidence="5" type="ordered locus">c3299</name>
</gene>
<feature type="chain" id="PRO_0000439751" description="3-oxo-tetronate 4-phosphate decarboxylase">
    <location>
        <begin position="1"/>
        <end position="212"/>
    </location>
</feature>
<feature type="active site" description="Proton acceptor" evidence="1">
    <location>
        <position position="79"/>
    </location>
</feature>
<feature type="active site" description="Proton donor" evidence="1">
    <location>
        <position position="125"/>
    </location>
</feature>
<feature type="binding site" evidence="1">
    <location>
        <position position="79"/>
    </location>
    <ligand>
        <name>Zn(2+)</name>
        <dbReference type="ChEBI" id="CHEBI:29105"/>
    </ligand>
</feature>
<feature type="binding site" evidence="1">
    <location>
        <position position="98"/>
    </location>
    <ligand>
        <name>Zn(2+)</name>
        <dbReference type="ChEBI" id="CHEBI:29105"/>
    </ligand>
</feature>
<feature type="binding site" evidence="1">
    <location>
        <position position="100"/>
    </location>
    <ligand>
        <name>Zn(2+)</name>
        <dbReference type="ChEBI" id="CHEBI:29105"/>
    </ligand>
</feature>
<feature type="binding site" evidence="1">
    <location>
        <position position="165"/>
    </location>
    <ligand>
        <name>Zn(2+)</name>
        <dbReference type="ChEBI" id="CHEBI:29105"/>
    </ligand>
</feature>
<proteinExistence type="evidence at protein level"/>
<accession>A0A0H2VA12</accession>
<keyword id="KW-0119">Carbohydrate metabolism</keyword>
<keyword id="KW-0456">Lyase</keyword>
<keyword id="KW-0479">Metal-binding</keyword>
<keyword id="KW-1185">Reference proteome</keyword>
<keyword id="KW-0862">Zinc</keyword>
<name>OTNC_ECOL6</name>
<sequence length="212" mass="23281">MSDFAKVEQSLREEMTRIASSFFQRGYATGSAGNLSLLLPDGNLLATPTGSCLGNLDPQRLSKVTADGEWLSGDKPSKEVLFHLALYRNNPRCKAVVHLHSTWSTALSCLEGLDSNNVIRPFTPYVVMRMGNVPLVPYYRPGDKRIAQDLAELAADNQAFLLANHGPVVCGESLQEAANNMEELEETAKLIFILGDRPIRYLTAGEIAELRS</sequence>
<protein>
    <recommendedName>
        <fullName evidence="3">3-oxo-tetronate 4-phosphate decarboxylase</fullName>
        <ecNumber evidence="2">4.1.1.104</ecNumber>
    </recommendedName>
</protein>
<dbReference type="EC" id="4.1.1.104" evidence="2"/>
<dbReference type="EMBL" id="AE014075">
    <property type="protein sequence ID" value="AAN81748.1"/>
    <property type="molecule type" value="Genomic_DNA"/>
</dbReference>
<dbReference type="RefSeq" id="WP_001279001.1">
    <property type="nucleotide sequence ID" value="NZ_CP051263.1"/>
</dbReference>
<dbReference type="SMR" id="A0A0H2VA12"/>
<dbReference type="STRING" id="199310.c3299"/>
<dbReference type="KEGG" id="ecc:c3299"/>
<dbReference type="eggNOG" id="COG0235">
    <property type="taxonomic scope" value="Bacteria"/>
</dbReference>
<dbReference type="HOGENOM" id="CLU_006033_3_2_6"/>
<dbReference type="BRENDA" id="4.1.1.104">
    <property type="organism ID" value="2026"/>
</dbReference>
<dbReference type="Proteomes" id="UP000001410">
    <property type="component" value="Chromosome"/>
</dbReference>
<dbReference type="GO" id="GO:0005829">
    <property type="term" value="C:cytosol"/>
    <property type="evidence" value="ECO:0007669"/>
    <property type="project" value="TreeGrafter"/>
</dbReference>
<dbReference type="GO" id="GO:0016832">
    <property type="term" value="F:aldehyde-lyase activity"/>
    <property type="evidence" value="ECO:0007669"/>
    <property type="project" value="InterPro"/>
</dbReference>
<dbReference type="GO" id="GO:0046872">
    <property type="term" value="F:metal ion binding"/>
    <property type="evidence" value="ECO:0007669"/>
    <property type="project" value="UniProtKB-KW"/>
</dbReference>
<dbReference type="GO" id="GO:0019323">
    <property type="term" value="P:pentose catabolic process"/>
    <property type="evidence" value="ECO:0007669"/>
    <property type="project" value="InterPro"/>
</dbReference>
<dbReference type="FunFam" id="3.40.225.10:FF:000008">
    <property type="entry name" value="Sugar aldolase"/>
    <property type="match status" value="1"/>
</dbReference>
<dbReference type="Gene3D" id="3.40.225.10">
    <property type="entry name" value="Class II aldolase/adducin N-terminal domain"/>
    <property type="match status" value="1"/>
</dbReference>
<dbReference type="InterPro" id="IPR050197">
    <property type="entry name" value="Aldolase_class_II_sugar_metab"/>
</dbReference>
<dbReference type="InterPro" id="IPR001303">
    <property type="entry name" value="Aldolase_II/adducin_N"/>
</dbReference>
<dbReference type="InterPro" id="IPR036409">
    <property type="entry name" value="Aldolase_II/adducin_N_sf"/>
</dbReference>
<dbReference type="InterPro" id="IPR050013">
    <property type="entry name" value="OtnC"/>
</dbReference>
<dbReference type="NCBIfam" id="NF043034">
    <property type="entry name" value="OxoTetrPhDc"/>
    <property type="match status" value="1"/>
</dbReference>
<dbReference type="NCBIfam" id="NF006000">
    <property type="entry name" value="PRK08130.1"/>
    <property type="match status" value="1"/>
</dbReference>
<dbReference type="PANTHER" id="PTHR22789:SF0">
    <property type="entry name" value="3-OXO-TETRONATE 4-PHOSPHATE DECARBOXYLASE-RELATED"/>
    <property type="match status" value="1"/>
</dbReference>
<dbReference type="PANTHER" id="PTHR22789">
    <property type="entry name" value="FUCULOSE PHOSPHATE ALDOLASE"/>
    <property type="match status" value="1"/>
</dbReference>
<dbReference type="Pfam" id="PF00596">
    <property type="entry name" value="Aldolase_II"/>
    <property type="match status" value="1"/>
</dbReference>
<dbReference type="SMART" id="SM01007">
    <property type="entry name" value="Aldolase_II"/>
    <property type="match status" value="1"/>
</dbReference>
<dbReference type="SUPFAM" id="SSF53639">
    <property type="entry name" value="AraD/HMP-PK domain-like"/>
    <property type="match status" value="1"/>
</dbReference>
<evidence type="ECO:0000250" key="1">
    <source>
        <dbReference type="UniProtKB" id="P0AB87"/>
    </source>
</evidence>
<evidence type="ECO:0000269" key="2">
    <source>
    </source>
</evidence>
<evidence type="ECO:0000303" key="3">
    <source>
    </source>
</evidence>
<evidence type="ECO:0000305" key="4"/>
<evidence type="ECO:0000312" key="5">
    <source>
        <dbReference type="EMBL" id="AAN81748.1"/>
    </source>
</evidence>
<comment type="function">
    <text evidence="2">Catalyzes the decarboxylation of 3-oxo-tetronate 4-phosphate to dihydroxyacetone phosphate (DHAP) and CO(2).</text>
</comment>
<comment type="catalytic activity">
    <reaction evidence="2">
        <text>3-dehydro-4-O-phospho-D-erythronate + H(+) = dihydroxyacetone phosphate + CO2</text>
        <dbReference type="Rhea" id="RHEA:52416"/>
        <dbReference type="ChEBI" id="CHEBI:15378"/>
        <dbReference type="ChEBI" id="CHEBI:16526"/>
        <dbReference type="ChEBI" id="CHEBI:57642"/>
        <dbReference type="ChEBI" id="CHEBI:136593"/>
        <dbReference type="EC" id="4.1.1.104"/>
    </reaction>
</comment>
<comment type="catalytic activity">
    <reaction evidence="2">
        <text>3-dehydro-4-O-phospho-L-erythronate + H(+) = dihydroxyacetone phosphate + CO2</text>
        <dbReference type="Rhea" id="RHEA:52404"/>
        <dbReference type="ChEBI" id="CHEBI:15378"/>
        <dbReference type="ChEBI" id="CHEBI:16526"/>
        <dbReference type="ChEBI" id="CHEBI:57642"/>
        <dbReference type="ChEBI" id="CHEBI:136592"/>
        <dbReference type="EC" id="4.1.1.104"/>
    </reaction>
</comment>
<comment type="cofactor">
    <cofactor evidence="1">
        <name>Zn(2+)</name>
        <dbReference type="ChEBI" id="CHEBI:29105"/>
    </cofactor>
    <text evidence="1">Binds 1 zinc ion per subunit.</text>
</comment>
<comment type="similarity">
    <text evidence="4">Belongs to the aldolase class II family. AraD/FucA subfamily.</text>
</comment>